<comment type="function">
    <text evidence="1">Binds mRNA; thus facilitating recognition of the initiation point. It is needed to translate mRNA with a short Shine-Dalgarno (SD) purine-rich sequence (By similarity).</text>
</comment>
<comment type="PTM">
    <text>The initiator methionine may be removed.</text>
</comment>
<comment type="similarity">
    <text evidence="3">Belongs to the bacterial ribosomal protein bS1 family.</text>
</comment>
<name>RS1_RHOPA</name>
<proteinExistence type="evidence at protein level"/>
<feature type="chain" id="PRO_0000224163" description="Small ribosomal subunit protein bS1">
    <location>
        <begin position="1"/>
        <end position="564"/>
    </location>
</feature>
<feature type="domain" description="S1 motif 1" evidence="2">
    <location>
        <begin position="30"/>
        <end position="96"/>
    </location>
</feature>
<feature type="domain" description="S1 motif 2" evidence="2">
    <location>
        <begin position="114"/>
        <end position="180"/>
    </location>
</feature>
<feature type="domain" description="S1 motif 3" evidence="2">
    <location>
        <begin position="201"/>
        <end position="269"/>
    </location>
</feature>
<feature type="domain" description="S1 motif 4" evidence="2">
    <location>
        <begin position="286"/>
        <end position="356"/>
    </location>
</feature>
<feature type="domain" description="S1 motif 5" evidence="2">
    <location>
        <begin position="373"/>
        <end position="443"/>
    </location>
</feature>
<feature type="domain" description="S1 motif 6" evidence="2">
    <location>
        <begin position="454"/>
        <end position="529"/>
    </location>
</feature>
<evidence type="ECO:0000250" key="1"/>
<evidence type="ECO:0000255" key="2">
    <source>
        <dbReference type="PROSITE-ProRule" id="PRU00180"/>
    </source>
</evidence>
<evidence type="ECO:0000305" key="3"/>
<keyword id="KW-0677">Repeat</keyword>
<keyword id="KW-0687">Ribonucleoprotein</keyword>
<keyword id="KW-0689">Ribosomal protein</keyword>
<keyword id="KW-0694">RNA-binding</keyword>
<reference key="1">
    <citation type="journal article" date="2004" name="Nat. Biotechnol.">
        <title>Complete genome sequence of the metabolically versatile photosynthetic bacterium Rhodopseudomonas palustris.</title>
        <authorList>
            <person name="Larimer F.W."/>
            <person name="Chain P."/>
            <person name="Hauser L."/>
            <person name="Lamerdin J.E."/>
            <person name="Malfatti S."/>
            <person name="Do L."/>
            <person name="Land M.L."/>
            <person name="Pelletier D.A."/>
            <person name="Beatty J.T."/>
            <person name="Lang A.S."/>
            <person name="Tabita F.R."/>
            <person name="Gibson J.L."/>
            <person name="Hanson T.E."/>
            <person name="Bobst C."/>
            <person name="Torres y Torres J.L."/>
            <person name="Peres C."/>
            <person name="Harrison F.H."/>
            <person name="Gibson J."/>
            <person name="Harwood C.S."/>
        </authorList>
    </citation>
    <scope>NUCLEOTIDE SEQUENCE [LARGE SCALE GENOMIC DNA]</scope>
    <source>
        <strain>ATCC BAA-98 / CGA009</strain>
    </source>
</reference>
<reference key="2">
    <citation type="journal article" date="2004" name="J. Proteome Res.">
        <title>Characterization of the 70S ribosome from Rhodopseudomonas palustris using an integrated 'top-down' and 'bottom-up' mass spectrometric approach.</title>
        <authorList>
            <person name="Strader M.B."/>
            <person name="VerBerkmoes N.C."/>
            <person name="Tabb D.L."/>
            <person name="Connelly H.M."/>
            <person name="Barton J.W."/>
            <person name="Bruce B.D."/>
            <person name="Pelletier D.A."/>
            <person name="Davison B.H."/>
            <person name="Hettich R.L."/>
            <person name="Larimer F.W."/>
            <person name="Hurst G.B."/>
        </authorList>
    </citation>
    <scope>IDENTIFICATION BY MASS SPECTROMETRY</scope>
    <source>
        <strain>ATCC BAA-98 / CGA009</strain>
    </source>
</reference>
<dbReference type="EMBL" id="BX572593">
    <property type="protein sequence ID" value="CAE25508.1"/>
    <property type="molecule type" value="Genomic_DNA"/>
</dbReference>
<dbReference type="RefSeq" id="WP_011155635.1">
    <property type="nucleotide sequence ID" value="NZ_CP116810.1"/>
</dbReference>
<dbReference type="SMR" id="Q6NDP1"/>
<dbReference type="IntAct" id="Q6NDP1">
    <property type="interactions" value="1"/>
</dbReference>
<dbReference type="STRING" id="258594.RPA0064"/>
<dbReference type="GeneID" id="66891065"/>
<dbReference type="eggNOG" id="COG0539">
    <property type="taxonomic scope" value="Bacteria"/>
</dbReference>
<dbReference type="HOGENOM" id="CLU_015805_2_1_5"/>
<dbReference type="PhylomeDB" id="Q6NDP1"/>
<dbReference type="GO" id="GO:0022627">
    <property type="term" value="C:cytosolic small ribosomal subunit"/>
    <property type="evidence" value="ECO:0007669"/>
    <property type="project" value="TreeGrafter"/>
</dbReference>
<dbReference type="GO" id="GO:0003729">
    <property type="term" value="F:mRNA binding"/>
    <property type="evidence" value="ECO:0007669"/>
    <property type="project" value="TreeGrafter"/>
</dbReference>
<dbReference type="GO" id="GO:0003735">
    <property type="term" value="F:structural constituent of ribosome"/>
    <property type="evidence" value="ECO:0007669"/>
    <property type="project" value="InterPro"/>
</dbReference>
<dbReference type="GO" id="GO:0006412">
    <property type="term" value="P:translation"/>
    <property type="evidence" value="ECO:0007669"/>
    <property type="project" value="InterPro"/>
</dbReference>
<dbReference type="CDD" id="cd05687">
    <property type="entry name" value="S1_RPS1_repeat_ec1_hs1"/>
    <property type="match status" value="1"/>
</dbReference>
<dbReference type="CDD" id="cd04465">
    <property type="entry name" value="S1_RPS1_repeat_ec2_hs2"/>
    <property type="match status" value="1"/>
</dbReference>
<dbReference type="CDD" id="cd05688">
    <property type="entry name" value="S1_RPS1_repeat_ec3"/>
    <property type="match status" value="1"/>
</dbReference>
<dbReference type="CDD" id="cd05691">
    <property type="entry name" value="S1_RPS1_repeat_ec6"/>
    <property type="match status" value="1"/>
</dbReference>
<dbReference type="FunFam" id="2.40.50.140:FF:000011">
    <property type="entry name" value="30S ribosomal protein S1"/>
    <property type="match status" value="1"/>
</dbReference>
<dbReference type="FunFam" id="2.40.50.140:FF:000016">
    <property type="entry name" value="30S ribosomal protein S1"/>
    <property type="match status" value="1"/>
</dbReference>
<dbReference type="FunFam" id="2.40.50.140:FF:000018">
    <property type="entry name" value="30S ribosomal protein S1"/>
    <property type="match status" value="1"/>
</dbReference>
<dbReference type="Gene3D" id="2.40.50.140">
    <property type="entry name" value="Nucleic acid-binding proteins"/>
    <property type="match status" value="5"/>
</dbReference>
<dbReference type="InterPro" id="IPR012340">
    <property type="entry name" value="NA-bd_OB-fold"/>
</dbReference>
<dbReference type="InterPro" id="IPR050437">
    <property type="entry name" value="Ribos_protein_bS1-like"/>
</dbReference>
<dbReference type="InterPro" id="IPR000110">
    <property type="entry name" value="Ribosomal_bS1"/>
</dbReference>
<dbReference type="InterPro" id="IPR035104">
    <property type="entry name" value="Ribosomal_protein_S1-like"/>
</dbReference>
<dbReference type="InterPro" id="IPR003029">
    <property type="entry name" value="S1_domain"/>
</dbReference>
<dbReference type="NCBIfam" id="NF004952">
    <property type="entry name" value="PRK06299.1-2"/>
    <property type="match status" value="1"/>
</dbReference>
<dbReference type="NCBIfam" id="NF004955">
    <property type="entry name" value="PRK06299.1-5"/>
    <property type="match status" value="1"/>
</dbReference>
<dbReference type="NCBIfam" id="TIGR00717">
    <property type="entry name" value="rpsA"/>
    <property type="match status" value="1"/>
</dbReference>
<dbReference type="PANTHER" id="PTHR10724">
    <property type="entry name" value="30S RIBOSOMAL PROTEIN S1"/>
    <property type="match status" value="1"/>
</dbReference>
<dbReference type="PANTHER" id="PTHR10724:SF7">
    <property type="entry name" value="SMALL RIBOSOMAL SUBUNIT PROTEIN BS1C"/>
    <property type="match status" value="1"/>
</dbReference>
<dbReference type="Pfam" id="PF00575">
    <property type="entry name" value="S1"/>
    <property type="match status" value="6"/>
</dbReference>
<dbReference type="PIRSF" id="PIRSF002111">
    <property type="entry name" value="RpsA"/>
    <property type="match status" value="1"/>
</dbReference>
<dbReference type="PRINTS" id="PR00681">
    <property type="entry name" value="RIBOSOMALS1"/>
</dbReference>
<dbReference type="SMART" id="SM00316">
    <property type="entry name" value="S1"/>
    <property type="match status" value="6"/>
</dbReference>
<dbReference type="SUPFAM" id="SSF50249">
    <property type="entry name" value="Nucleic acid-binding proteins"/>
    <property type="match status" value="6"/>
</dbReference>
<dbReference type="PROSITE" id="PS50126">
    <property type="entry name" value="S1"/>
    <property type="match status" value="6"/>
</dbReference>
<organism>
    <name type="scientific">Rhodopseudomonas palustris (strain ATCC BAA-98 / CGA009)</name>
    <dbReference type="NCBI Taxonomy" id="258594"/>
    <lineage>
        <taxon>Bacteria</taxon>
        <taxon>Pseudomonadati</taxon>
        <taxon>Pseudomonadota</taxon>
        <taxon>Alphaproteobacteria</taxon>
        <taxon>Hyphomicrobiales</taxon>
        <taxon>Nitrobacteraceae</taxon>
        <taxon>Rhodopseudomonas</taxon>
    </lineage>
</organism>
<sequence length="565" mass="62800">MASTDTYNPTRDDFAAMLDESFAGGNLQESSVIKGKVVAIEKDMAVIDVGLKTEGRVPLREFAGPGRDNEIKVGDTVEVFLDRIENALGEAVLSRDKARREESWGKLEKAFQNNEKVFGVIFNQVKGGFTVDLDGAVAFLPRSQVDIRPIRDVAPLMNNSQPFQILKMDRRRGNIVVSRRTVLEETRAEQRQELVQNLEEGQVIDGVVKNITDYGAFVDLGGIDGLLHVTDIAWRRVNHPTEVLTIGQTVKVKIIKINHETHRISLGMKQLLDDPWQGIEAKYPLNARFTGRVTNITDYGAFVELEPGIEGLIHVSEMSWTKKNMHPGKIVSTSQEVEVQVLEVDSVKRRISLGLKQTMRNPWEVFVEKHPVGSTVEGEVKNKTEFGLFLGLDGDVDGMVHLSDLDWKLPGEQVIDNFKKGDMVKAVVLDVDVEKERISLGVKQLEGDPFAEPGDVKKGAVVTCEVLDVKESGIDVQIVGTDFNTFIKRSELARDRNDQRSDRFAVGEKVDARVIQFDKKARKVQVSIKALEVAEEKEAIAQYGSSDSGATLGDILGTALKQRDK</sequence>
<accession>Q6NDP1</accession>
<gene>
    <name type="primary">rpsA</name>
    <name type="ordered locus">RPA0064</name>
</gene>
<protein>
    <recommendedName>
        <fullName evidence="3">Small ribosomal subunit protein bS1</fullName>
    </recommendedName>
    <alternativeName>
        <fullName>30S ribosomal protein S1</fullName>
    </alternativeName>
    <alternativeName>
        <fullName>RRP-S1</fullName>
    </alternativeName>
</protein>